<keyword id="KW-0007">Acetylation</keyword>
<keyword id="KW-0020">Allergen</keyword>
<keyword id="KW-0175">Coiled coil</keyword>
<keyword id="KW-0514">Muscle protein</keyword>
<keyword id="KW-0677">Repeat</keyword>
<accession>Q9N2R3</accession>
<organism>
    <name type="scientific">Charybdis feriata</name>
    <name type="common">Crucifix crab</name>
    <name type="synonym">Cancer feriatus</name>
    <dbReference type="NCBI Taxonomy" id="65693"/>
    <lineage>
        <taxon>Eukaryota</taxon>
        <taxon>Metazoa</taxon>
        <taxon>Ecdysozoa</taxon>
        <taxon>Arthropoda</taxon>
        <taxon>Crustacea</taxon>
        <taxon>Multicrustacea</taxon>
        <taxon>Malacostraca</taxon>
        <taxon>Eumalacostraca</taxon>
        <taxon>Eucarida</taxon>
        <taxon>Decapoda</taxon>
        <taxon>Pleocyemata</taxon>
        <taxon>Brachyura</taxon>
        <taxon>Eubrachyura</taxon>
        <taxon>Portunoidea</taxon>
        <taxon>Portunidae</taxon>
        <taxon>Thalamitinae</taxon>
        <taxon>Charybdis</taxon>
    </lineage>
</organism>
<comment type="function">
    <text evidence="4">Tropomyosin, in association with the troponin complex, plays a central role in the calcium dependent regulation of muscle contraction.</text>
</comment>
<comment type="subunit">
    <text evidence="3">Homodimer.</text>
</comment>
<comment type="tissue specificity">
    <text evidence="6 7">Expressed in muscle (at protein level) (PubMed:23393908). Expressed in claw muscles (PubMed:9819304).</text>
</comment>
<comment type="domain">
    <text evidence="10">The molecule is in a coiled coil structure that is formed by 2 polypeptide chains. The sequence exhibits a prominent seven-residues periodicity.</text>
</comment>
<comment type="allergen">
    <text evidence="6 7">Causes an allergic reaction in human. Natural and recombinant protein binds to IgE of patients allergic to crabs (PubMed:23393908, PubMed:9819304). Recombinant protein binds to IgE in all 10 patients tested allergic to crustaceans. Cross-reacts with greasyback shrimp topomyosin allergen Met e 1.0101 and Chinese spiny lobster tropomyosin allergen Pan s 1 (PubMed:9819304). Cross-reacts with blue swimmer crab tropomyosin allergen Por p 1 (PubMed:23393908).</text>
</comment>
<comment type="similarity">
    <text evidence="10">Belongs to the tropomyosin family.</text>
</comment>
<name>TPM_CHAFE</name>
<proteinExistence type="evidence at protein level"/>
<protein>
    <recommendedName>
        <fullName evidence="10">Tropomyosin Cha f 1.0101</fullName>
    </recommendedName>
    <alternativeName>
        <fullName evidence="8 9">Major allergen Cha f 1</fullName>
    </alternativeName>
    <allergenName evidence="10">Cha f 1.0101</allergenName>
</protein>
<feature type="chain" id="PRO_0000205673" description="Tropomyosin Cha f 1.0101">
    <location>
        <begin position="1"/>
        <end position="264" status="greater than"/>
    </location>
</feature>
<feature type="region of interest" description="Disordered" evidence="5">
    <location>
        <begin position="1"/>
        <end position="56"/>
    </location>
</feature>
<feature type="region of interest" description="Disordered" evidence="5">
    <location>
        <begin position="92"/>
        <end position="126"/>
    </location>
</feature>
<feature type="coiled-coil region" evidence="1">
    <location>
        <begin position="1"/>
        <end position="264" status="greater than"/>
    </location>
</feature>
<feature type="compositionally biased region" description="Basic and acidic residues" evidence="5">
    <location>
        <begin position="12"/>
        <end position="45"/>
    </location>
</feature>
<feature type="modified residue" description="N-acetylmethionine" evidence="2">
    <location>
        <position position="1"/>
    </location>
</feature>
<feature type="non-terminal residue">
    <location>
        <position position="264"/>
    </location>
</feature>
<reference key="1">
    <citation type="journal article" date="1998" name="J. Allergy Clin. Immunol.">
        <title>Identification and molecular characterization of Charybdis feriatus tropomyosin, the major crab allergen.</title>
        <authorList>
            <person name="Leung P.S.C."/>
            <person name="Chen Y.C."/>
            <person name="Gershwin M.E."/>
            <person name="Wong S.H."/>
            <person name="Kwan H.S."/>
            <person name="Chu K.H."/>
        </authorList>
    </citation>
    <scope>NUCLEOTIDE SEQUENCE [MRNA]</scope>
    <scope>TISSUE SPECIFICITY</scope>
    <scope>ALLERGEN</scope>
    <source>
        <tissue evidence="9">Muscle</tissue>
    </source>
</reference>
<reference key="2">
    <citation type="journal article" date="2012" name="Asian Pac. J. Allergy Immunol.">
        <title>Identification of the major allergens of Charybdis feriatus (red crab) and its cross-reactivity with Portunus pelagicus (blue crab).</title>
        <authorList>
            <person name="Misnan R."/>
            <person name="Murad S."/>
            <person name="Yadzir Z.H."/>
            <person name="Abdullah N."/>
        </authorList>
    </citation>
    <scope>TISSUE SPECIFICITY</scope>
    <scope>IDENTIFICATION BY MASS SPECTROMETRY</scope>
    <scope>ALLERGEN</scope>
</reference>
<evidence type="ECO:0000250" key="1"/>
<evidence type="ECO:0000250" key="2">
    <source>
        <dbReference type="UniProtKB" id="A1KYZ2"/>
    </source>
</evidence>
<evidence type="ECO:0000250" key="3">
    <source>
        <dbReference type="UniProtKB" id="A2V735"/>
    </source>
</evidence>
<evidence type="ECO:0000250" key="4">
    <source>
        <dbReference type="UniProtKB" id="Q22866"/>
    </source>
</evidence>
<evidence type="ECO:0000256" key="5">
    <source>
        <dbReference type="SAM" id="MobiDB-lite"/>
    </source>
</evidence>
<evidence type="ECO:0000269" key="6">
    <source>
    </source>
</evidence>
<evidence type="ECO:0000269" key="7">
    <source>
    </source>
</evidence>
<evidence type="ECO:0000303" key="8">
    <source>
    </source>
</evidence>
<evidence type="ECO:0000303" key="9">
    <source>
    </source>
</evidence>
<evidence type="ECO:0000305" key="10"/>
<dbReference type="EMBL" id="AF061783">
    <property type="protein sequence ID" value="AAF35431.1"/>
    <property type="molecule type" value="mRNA"/>
</dbReference>
<dbReference type="SMR" id="Q9N2R3"/>
<dbReference type="Allergome" id="196">
    <property type="allergen name" value="Cha f 1"/>
</dbReference>
<dbReference type="Allergome" id="3185">
    <property type="allergen name" value="Cha f 1.0101"/>
</dbReference>
<dbReference type="GO" id="GO:0042803">
    <property type="term" value="F:protein homodimerization activity"/>
    <property type="evidence" value="ECO:0000250"/>
    <property type="project" value="UniProtKB"/>
</dbReference>
<dbReference type="GO" id="GO:0040011">
    <property type="term" value="P:locomotion"/>
    <property type="evidence" value="ECO:0000250"/>
    <property type="project" value="UniProtKB"/>
</dbReference>
<dbReference type="GO" id="GO:0003012">
    <property type="term" value="P:muscle system process"/>
    <property type="evidence" value="ECO:0000270"/>
    <property type="project" value="UniProtKB"/>
</dbReference>
<dbReference type="GO" id="GO:0006937">
    <property type="term" value="P:regulation of muscle contraction"/>
    <property type="evidence" value="ECO:0000250"/>
    <property type="project" value="UniProtKB"/>
</dbReference>
<dbReference type="FunFam" id="1.20.5.170:FF:000001">
    <property type="entry name" value="Tropomyosin alpha-1 chain isoform 1"/>
    <property type="match status" value="1"/>
</dbReference>
<dbReference type="FunFam" id="1.20.5.340:FF:000001">
    <property type="entry name" value="Tropomyosin alpha-1 chain isoform 2"/>
    <property type="match status" value="1"/>
</dbReference>
<dbReference type="Gene3D" id="1.20.5.170">
    <property type="match status" value="2"/>
</dbReference>
<dbReference type="Gene3D" id="1.20.5.340">
    <property type="match status" value="1"/>
</dbReference>
<dbReference type="InterPro" id="IPR000533">
    <property type="entry name" value="Tropomyosin"/>
</dbReference>
<dbReference type="PANTHER" id="PTHR19269">
    <property type="entry name" value="TROPOMYOSIN"/>
    <property type="match status" value="1"/>
</dbReference>
<dbReference type="Pfam" id="PF00261">
    <property type="entry name" value="Tropomyosin"/>
    <property type="match status" value="1"/>
</dbReference>
<dbReference type="PRINTS" id="PR00194">
    <property type="entry name" value="TROPOMYOSIN"/>
</dbReference>
<dbReference type="SUPFAM" id="SSF57997">
    <property type="entry name" value="Tropomyosin"/>
    <property type="match status" value="1"/>
</dbReference>
<dbReference type="PROSITE" id="PS00326">
    <property type="entry name" value="TROPOMYOSIN"/>
    <property type="match status" value="1"/>
</dbReference>
<sequence>MDAIKKKMQAMKLEKDNAMDRADTLEQQNKEANLRAEKTEEEIRATQKKMQQVENELDQAQEQLSAANTKLDEKEKALQNAEGEVAALNRRIQLPEEDLERSEERLNTATTKLAEASQAADESERMRKVLENRSLSDEERMDALENQLKEARFLAEEADRKYDEVARKLAMVEADLERAEERAESGESKIVELEEELRVVGNNLKSLEVSEEKANQREETYKEQIKTLANKLKAAEARAEFAERSVQKLQKEVDRLEDELVNEK</sequence>